<dbReference type="EMBL" id="CP000409">
    <property type="protein sequence ID" value="ABV73084.1"/>
    <property type="molecule type" value="Genomic_DNA"/>
</dbReference>
<dbReference type="RefSeq" id="WP_012148285.1">
    <property type="nucleotide sequence ID" value="NC_009879.1"/>
</dbReference>
<dbReference type="SMR" id="A8EXK1"/>
<dbReference type="STRING" id="293613.A1E_00680"/>
<dbReference type="KEGG" id="rcm:A1E_00680"/>
<dbReference type="eggNOG" id="COG0480">
    <property type="taxonomic scope" value="Bacteria"/>
</dbReference>
<dbReference type="HOGENOM" id="CLU_002794_4_1_5"/>
<dbReference type="Proteomes" id="UP000007056">
    <property type="component" value="Chromosome"/>
</dbReference>
<dbReference type="GO" id="GO:0005737">
    <property type="term" value="C:cytoplasm"/>
    <property type="evidence" value="ECO:0007669"/>
    <property type="project" value="UniProtKB-SubCell"/>
</dbReference>
<dbReference type="GO" id="GO:0005525">
    <property type="term" value="F:GTP binding"/>
    <property type="evidence" value="ECO:0007669"/>
    <property type="project" value="UniProtKB-UniRule"/>
</dbReference>
<dbReference type="GO" id="GO:0003924">
    <property type="term" value="F:GTPase activity"/>
    <property type="evidence" value="ECO:0007669"/>
    <property type="project" value="InterPro"/>
</dbReference>
<dbReference type="GO" id="GO:0003746">
    <property type="term" value="F:translation elongation factor activity"/>
    <property type="evidence" value="ECO:0007669"/>
    <property type="project" value="UniProtKB-UniRule"/>
</dbReference>
<dbReference type="GO" id="GO:0032790">
    <property type="term" value="P:ribosome disassembly"/>
    <property type="evidence" value="ECO:0007669"/>
    <property type="project" value="TreeGrafter"/>
</dbReference>
<dbReference type="CDD" id="cd01886">
    <property type="entry name" value="EF-G"/>
    <property type="match status" value="1"/>
</dbReference>
<dbReference type="CDD" id="cd16262">
    <property type="entry name" value="EFG_III"/>
    <property type="match status" value="1"/>
</dbReference>
<dbReference type="CDD" id="cd01434">
    <property type="entry name" value="EFG_mtEFG1_IV"/>
    <property type="match status" value="1"/>
</dbReference>
<dbReference type="CDD" id="cd03713">
    <property type="entry name" value="EFG_mtEFG_C"/>
    <property type="match status" value="1"/>
</dbReference>
<dbReference type="CDD" id="cd04088">
    <property type="entry name" value="EFG_mtEFG_II"/>
    <property type="match status" value="1"/>
</dbReference>
<dbReference type="FunFam" id="2.40.30.10:FF:000006">
    <property type="entry name" value="Elongation factor G"/>
    <property type="match status" value="1"/>
</dbReference>
<dbReference type="FunFam" id="3.30.230.10:FF:000003">
    <property type="entry name" value="Elongation factor G"/>
    <property type="match status" value="1"/>
</dbReference>
<dbReference type="FunFam" id="3.30.70.240:FF:000001">
    <property type="entry name" value="Elongation factor G"/>
    <property type="match status" value="1"/>
</dbReference>
<dbReference type="FunFam" id="3.30.70.870:FF:000001">
    <property type="entry name" value="Elongation factor G"/>
    <property type="match status" value="1"/>
</dbReference>
<dbReference type="FunFam" id="3.40.50.300:FF:000029">
    <property type="entry name" value="Elongation factor G"/>
    <property type="match status" value="1"/>
</dbReference>
<dbReference type="Gene3D" id="3.30.230.10">
    <property type="match status" value="1"/>
</dbReference>
<dbReference type="Gene3D" id="3.30.70.240">
    <property type="match status" value="1"/>
</dbReference>
<dbReference type="Gene3D" id="3.30.70.870">
    <property type="entry name" value="Elongation Factor G (Translational Gtpase), domain 3"/>
    <property type="match status" value="1"/>
</dbReference>
<dbReference type="Gene3D" id="3.40.50.300">
    <property type="entry name" value="P-loop containing nucleotide triphosphate hydrolases"/>
    <property type="match status" value="1"/>
</dbReference>
<dbReference type="Gene3D" id="2.40.30.10">
    <property type="entry name" value="Translation factors"/>
    <property type="match status" value="1"/>
</dbReference>
<dbReference type="HAMAP" id="MF_00054_B">
    <property type="entry name" value="EF_G_EF_2_B"/>
    <property type="match status" value="1"/>
</dbReference>
<dbReference type="InterPro" id="IPR053905">
    <property type="entry name" value="EF-G-like_DII"/>
</dbReference>
<dbReference type="InterPro" id="IPR041095">
    <property type="entry name" value="EFG_II"/>
</dbReference>
<dbReference type="InterPro" id="IPR009022">
    <property type="entry name" value="EFG_III"/>
</dbReference>
<dbReference type="InterPro" id="IPR035647">
    <property type="entry name" value="EFG_III/V"/>
</dbReference>
<dbReference type="InterPro" id="IPR047872">
    <property type="entry name" value="EFG_IV"/>
</dbReference>
<dbReference type="InterPro" id="IPR035649">
    <property type="entry name" value="EFG_V"/>
</dbReference>
<dbReference type="InterPro" id="IPR000640">
    <property type="entry name" value="EFG_V-like"/>
</dbReference>
<dbReference type="InterPro" id="IPR031157">
    <property type="entry name" value="G_TR_CS"/>
</dbReference>
<dbReference type="InterPro" id="IPR027417">
    <property type="entry name" value="P-loop_NTPase"/>
</dbReference>
<dbReference type="InterPro" id="IPR020568">
    <property type="entry name" value="Ribosomal_Su5_D2-typ_SF"/>
</dbReference>
<dbReference type="InterPro" id="IPR014721">
    <property type="entry name" value="Ribsml_uS5_D2-typ_fold_subgr"/>
</dbReference>
<dbReference type="InterPro" id="IPR005225">
    <property type="entry name" value="Small_GTP-bd"/>
</dbReference>
<dbReference type="InterPro" id="IPR000795">
    <property type="entry name" value="T_Tr_GTP-bd_dom"/>
</dbReference>
<dbReference type="InterPro" id="IPR009000">
    <property type="entry name" value="Transl_B-barrel_sf"/>
</dbReference>
<dbReference type="InterPro" id="IPR004540">
    <property type="entry name" value="Transl_elong_EFG/EF2"/>
</dbReference>
<dbReference type="InterPro" id="IPR005517">
    <property type="entry name" value="Transl_elong_EFG/EF2_IV"/>
</dbReference>
<dbReference type="NCBIfam" id="TIGR00484">
    <property type="entry name" value="EF-G"/>
    <property type="match status" value="1"/>
</dbReference>
<dbReference type="NCBIfam" id="NF009381">
    <property type="entry name" value="PRK12740.1-5"/>
    <property type="match status" value="1"/>
</dbReference>
<dbReference type="NCBIfam" id="TIGR00231">
    <property type="entry name" value="small_GTP"/>
    <property type="match status" value="1"/>
</dbReference>
<dbReference type="PANTHER" id="PTHR43261:SF1">
    <property type="entry name" value="RIBOSOME-RELEASING FACTOR 2, MITOCHONDRIAL"/>
    <property type="match status" value="1"/>
</dbReference>
<dbReference type="PANTHER" id="PTHR43261">
    <property type="entry name" value="TRANSLATION ELONGATION FACTOR G-RELATED"/>
    <property type="match status" value="1"/>
</dbReference>
<dbReference type="Pfam" id="PF22042">
    <property type="entry name" value="EF-G_D2"/>
    <property type="match status" value="1"/>
</dbReference>
<dbReference type="Pfam" id="PF00679">
    <property type="entry name" value="EFG_C"/>
    <property type="match status" value="1"/>
</dbReference>
<dbReference type="Pfam" id="PF14492">
    <property type="entry name" value="EFG_III"/>
    <property type="match status" value="1"/>
</dbReference>
<dbReference type="Pfam" id="PF03764">
    <property type="entry name" value="EFG_IV"/>
    <property type="match status" value="1"/>
</dbReference>
<dbReference type="Pfam" id="PF00009">
    <property type="entry name" value="GTP_EFTU"/>
    <property type="match status" value="1"/>
</dbReference>
<dbReference type="PRINTS" id="PR00315">
    <property type="entry name" value="ELONGATNFCT"/>
</dbReference>
<dbReference type="SMART" id="SM00838">
    <property type="entry name" value="EFG_C"/>
    <property type="match status" value="1"/>
</dbReference>
<dbReference type="SMART" id="SM00889">
    <property type="entry name" value="EFG_IV"/>
    <property type="match status" value="1"/>
</dbReference>
<dbReference type="SUPFAM" id="SSF54980">
    <property type="entry name" value="EF-G C-terminal domain-like"/>
    <property type="match status" value="2"/>
</dbReference>
<dbReference type="SUPFAM" id="SSF52540">
    <property type="entry name" value="P-loop containing nucleoside triphosphate hydrolases"/>
    <property type="match status" value="1"/>
</dbReference>
<dbReference type="SUPFAM" id="SSF54211">
    <property type="entry name" value="Ribosomal protein S5 domain 2-like"/>
    <property type="match status" value="1"/>
</dbReference>
<dbReference type="SUPFAM" id="SSF50447">
    <property type="entry name" value="Translation proteins"/>
    <property type="match status" value="1"/>
</dbReference>
<dbReference type="PROSITE" id="PS00301">
    <property type="entry name" value="G_TR_1"/>
    <property type="match status" value="1"/>
</dbReference>
<dbReference type="PROSITE" id="PS51722">
    <property type="entry name" value="G_TR_2"/>
    <property type="match status" value="1"/>
</dbReference>
<comment type="function">
    <text evidence="1">Catalyzes the GTP-dependent ribosomal translocation step during translation elongation. During this step, the ribosome changes from the pre-translocational (PRE) to the post-translocational (POST) state as the newly formed A-site-bound peptidyl-tRNA and P-site-bound deacylated tRNA move to the P and E sites, respectively. Catalyzes the coordinated movement of the two tRNA molecules, the mRNA and conformational changes in the ribosome.</text>
</comment>
<comment type="subcellular location">
    <subcellularLocation>
        <location evidence="1">Cytoplasm</location>
    </subcellularLocation>
</comment>
<comment type="similarity">
    <text evidence="1">Belongs to the TRAFAC class translation factor GTPase superfamily. Classic translation factor GTPase family. EF-G/EF-2 subfamily.</text>
</comment>
<gene>
    <name evidence="1" type="primary">fusA</name>
    <name type="ordered locus">A1E_00680</name>
</gene>
<name>EFG_RICCK</name>
<evidence type="ECO:0000255" key="1">
    <source>
        <dbReference type="HAMAP-Rule" id="MF_00054"/>
    </source>
</evidence>
<protein>
    <recommendedName>
        <fullName evidence="1">Elongation factor G</fullName>
        <shortName evidence="1">EF-G</shortName>
    </recommendedName>
</protein>
<feature type="chain" id="PRO_1000008876" description="Elongation factor G">
    <location>
        <begin position="1"/>
        <end position="690"/>
    </location>
</feature>
<feature type="domain" description="tr-type G">
    <location>
        <begin position="8"/>
        <end position="283"/>
    </location>
</feature>
<feature type="binding site" evidence="1">
    <location>
        <begin position="17"/>
        <end position="24"/>
    </location>
    <ligand>
        <name>GTP</name>
        <dbReference type="ChEBI" id="CHEBI:37565"/>
    </ligand>
</feature>
<feature type="binding site" evidence="1">
    <location>
        <begin position="81"/>
        <end position="85"/>
    </location>
    <ligand>
        <name>GTP</name>
        <dbReference type="ChEBI" id="CHEBI:37565"/>
    </ligand>
</feature>
<feature type="binding site" evidence="1">
    <location>
        <begin position="135"/>
        <end position="138"/>
    </location>
    <ligand>
        <name>GTP</name>
        <dbReference type="ChEBI" id="CHEBI:37565"/>
    </ligand>
</feature>
<sequence>MTKINKLEYIRNIGICAHIDAGKTTTTERILYYTGKSHKIGEVHEGGATMDWMEQEQERGITITSAATTCRWQDKIINIIDTPGHVDFTIEVERSLRVLDGAVAVFDGVAGVEPQSETVWRQADKYNVPRMCFINKMDRMGADFYRCVEMIKDRLGAKPLVIQLPVGIEENFKGIIDLVKMKAVIWKDESLGAEYFAEDIPADMKYKAEEYRTKLLDMVVELDDHIMEKYLSGEEVTEEEIERLIRNGTISAAFYPVLCGSAFKNKGVQPLLDAVVGFLPSPIDIGIVKGIEVSTGEEKDFPISVTEPFAALAFKIMNDPFVGSLTFIRIYSGKITSGSTVINTVKNKREKIGRMLLMHANNREDVKEASAGDIVALAGLKDTTTGDTLSDIDKQVILERMEFPEPVIELAVEPKSTADQEKMGLALSRLAAEDPSFRVSMDHETGQTVIKGMGELHLEIIIDRMRREFKVEANIGAPQVAYRETITKICEIDYTHKKQSGGAGQFARVKIIFEPLNPGEGFVFESKIVGGAVPKEYIPGIEKGLNNIRETGVIAGYPMIDFKATLVDGAFHDVDSSVLAFEIAAKAAFREGMLKGNPKLLEPIMKVEVITPDEYMGDIIGDLNSRRGQIQSMDPRANAQVVTSNVPLAEMFGYVNTLRSLSQGRAQFSMIFSHYDQVPSQIADVIKAKK</sequence>
<keyword id="KW-0963">Cytoplasm</keyword>
<keyword id="KW-0251">Elongation factor</keyword>
<keyword id="KW-0342">GTP-binding</keyword>
<keyword id="KW-0547">Nucleotide-binding</keyword>
<keyword id="KW-0648">Protein biosynthesis</keyword>
<organism>
    <name type="scientific">Rickettsia canadensis (strain McKiel)</name>
    <dbReference type="NCBI Taxonomy" id="293613"/>
    <lineage>
        <taxon>Bacteria</taxon>
        <taxon>Pseudomonadati</taxon>
        <taxon>Pseudomonadota</taxon>
        <taxon>Alphaproteobacteria</taxon>
        <taxon>Rickettsiales</taxon>
        <taxon>Rickettsiaceae</taxon>
        <taxon>Rickettsieae</taxon>
        <taxon>Rickettsia</taxon>
        <taxon>belli group</taxon>
    </lineage>
</organism>
<accession>A8EXK1</accession>
<reference key="1">
    <citation type="submission" date="2007-09" db="EMBL/GenBank/DDBJ databases">
        <title>Complete genome sequence of Rickettsia canadensis.</title>
        <authorList>
            <person name="Madan A."/>
            <person name="Fahey J."/>
            <person name="Helton E."/>
            <person name="Ketteman M."/>
            <person name="Madan A."/>
            <person name="Rodrigues S."/>
            <person name="Sanchez A."/>
            <person name="Whiting M."/>
            <person name="Dasch G."/>
            <person name="Eremeeva M."/>
        </authorList>
    </citation>
    <scope>NUCLEOTIDE SEQUENCE [LARGE SCALE GENOMIC DNA]</scope>
    <source>
        <strain>McKiel</strain>
    </source>
</reference>
<proteinExistence type="inferred from homology"/>